<name>PPE17_MYCTU</name>
<comment type="function">
    <text evidence="2 5">Induces pro-inflammatory responses (PubMed:22427668, PubMed:27481848). Induces host TLR1/2 heterodimerization, which causes an increased recruitment of IRAK1, MYD88, and protein kinase C epsilon (PRKCE) to the downstream TLR-signaling complex that translocates PRKCE into the nucleus in an IRAK1-dependent manner. PRKCE-mediated phosphorylation allowed the nuclear IRAK3 to be exported to the cytoplasm, leading to increased activation of ERK1/2, stabilization of MAPK phosphatase 1 (MKP1), and induction of TNF-alpha with concomitant down-regulation of MAP kinase p38 (PubMed:27481848).</text>
</comment>
<comment type="function">
    <text evidence="2">During M.tuberculosis and HIV-1 co-infection, can stimulate transcription from the long terminal repeat (LTR) of HIV-1 in monocyte/macrophage cells. Interaction with human TLR2 activates the NF-kappa-B transcription factor, which binds to the promoter region of the HIV-1 and induces HIV-1 gene expression.</text>
</comment>
<comment type="subunit">
    <text evidence="2">Interacts with LRR motifs 15-20 of host Toll-like receptor 2 (TLR2).</text>
</comment>
<comment type="subcellular location">
    <subcellularLocation>
        <location evidence="2 3">Secreted</location>
        <location evidence="2 3">Cell wall</location>
    </subcellularLocation>
    <subcellularLocation>
        <location evidence="3">Cell surface</location>
    </subcellularLocation>
    <text evidence="3">Not secreted but surface exposed. Mainly localized in the cell wall fraction regardless of PE11 co-expression.</text>
</comment>
<comment type="induction">
    <text evidence="1 3">Up-regulated under microaerophilic and anaerobic conditions, nutrient starvation and in the presence of palmitic acid (PubMed:18400969). Coexpressed with PE11 (PubMed:23469198).</text>
</comment>
<comment type="domain">
    <text evidence="2 3">The N-terminal domain is essential for interaction with TLR2 and activation of HIV-1 LTR (PubMed:22427668). The PPE region contains the information necessary for targeting and anchorage to the cell wall (PubMed:23469198).</text>
</comment>
<comment type="miscellaneous">
    <text evidence="1 4 6 7">Shows a strong immunoreactivity toward tuberculosis (TB) patient sera compared to that of BCG-vaccinated controls. Could be an attractive candidate for serodiagnosis to discriminate patients with active tuberculosis from BCG-vaccinated individuals. Could diagnose both pulmonary and extrapulmonary tuberculosis cases (PubMed:18400969, PubMed:26364913, PubMed:28651002). Can also be used as a novel serodiagnostic marker to detect latent tuberculosis infection (LTBI) (PubMed:30475863). Antibody responses elicited in TB patients are directed mostly towards the N-terminal domain of PPE17, suggesting that the N-terminal domain of PPE17 protein is immunodominant and could be used as a better serodiagnostic marker than the full-length PPE17 protein (PubMed:28651002). Antibodies directed against N-terminal domain of PPE17 in active TB patients do not significantly cross-react with N-terminal domains of other PPE proteins (PubMed:28651002).</text>
</comment>
<comment type="similarity">
    <text evidence="8">Belongs to the mycobacterial PPE family.</text>
</comment>
<dbReference type="EMBL" id="AL123456">
    <property type="protein sequence ID" value="CCP43924.1"/>
    <property type="molecule type" value="Genomic_DNA"/>
</dbReference>
<dbReference type="PIR" id="H70874">
    <property type="entry name" value="H70874"/>
</dbReference>
<dbReference type="RefSeq" id="WP_003898751.1">
    <property type="nucleotide sequence ID" value="NZ_NVQJ01000025.1"/>
</dbReference>
<dbReference type="RefSeq" id="YP_177791.1">
    <property type="nucleotide sequence ID" value="NC_000962.3"/>
</dbReference>
<dbReference type="SMR" id="P9WI27"/>
<dbReference type="STRING" id="83332.Rv1168c"/>
<dbReference type="PaxDb" id="83332-Rv1168c"/>
<dbReference type="DNASU" id="885990"/>
<dbReference type="GeneID" id="885990"/>
<dbReference type="KEGG" id="mtu:Rv1168c"/>
<dbReference type="KEGG" id="mtv:RVBD_1168c"/>
<dbReference type="TubercuList" id="Rv1168c"/>
<dbReference type="eggNOG" id="COG5651">
    <property type="taxonomic scope" value="Bacteria"/>
</dbReference>
<dbReference type="InParanoid" id="P9WI27"/>
<dbReference type="OrthoDB" id="4753774at2"/>
<dbReference type="PhylomeDB" id="P9WI27"/>
<dbReference type="Proteomes" id="UP000001584">
    <property type="component" value="Chromosome"/>
</dbReference>
<dbReference type="GO" id="GO:0009986">
    <property type="term" value="C:cell surface"/>
    <property type="evidence" value="ECO:0007669"/>
    <property type="project" value="UniProtKB-SubCell"/>
</dbReference>
<dbReference type="GO" id="GO:0005576">
    <property type="term" value="C:extracellular region"/>
    <property type="evidence" value="ECO:0007669"/>
    <property type="project" value="UniProtKB-KW"/>
</dbReference>
<dbReference type="GO" id="GO:0052572">
    <property type="term" value="P:response to host immune response"/>
    <property type="evidence" value="ECO:0000318"/>
    <property type="project" value="GO_Central"/>
</dbReference>
<dbReference type="Gene3D" id="1.20.1260.20">
    <property type="entry name" value="PPE superfamily"/>
    <property type="match status" value="1"/>
</dbReference>
<dbReference type="InterPro" id="IPR022171">
    <property type="entry name" value="PPE_C"/>
</dbReference>
<dbReference type="InterPro" id="IPR000030">
    <property type="entry name" value="PPE_dom"/>
</dbReference>
<dbReference type="InterPro" id="IPR038332">
    <property type="entry name" value="PPE_sf"/>
</dbReference>
<dbReference type="PANTHER" id="PTHR46766">
    <property type="entry name" value="GLUTAMINE-RICH PROTEIN 2"/>
    <property type="match status" value="1"/>
</dbReference>
<dbReference type="PANTHER" id="PTHR46766:SF1">
    <property type="entry name" value="GLUTAMINE-RICH PROTEIN 2"/>
    <property type="match status" value="1"/>
</dbReference>
<dbReference type="Pfam" id="PF00823">
    <property type="entry name" value="PPE"/>
    <property type="match status" value="1"/>
</dbReference>
<dbReference type="Pfam" id="PF12484">
    <property type="entry name" value="PPE-SVP"/>
    <property type="match status" value="1"/>
</dbReference>
<dbReference type="SUPFAM" id="SSF140459">
    <property type="entry name" value="PE/PPE dimer-like"/>
    <property type="match status" value="1"/>
</dbReference>
<feature type="chain" id="PRO_0000379109" description="PPE family protein PPE17">
    <location>
        <begin position="1"/>
        <end position="346"/>
    </location>
</feature>
<feature type="region of interest" description="PPE" evidence="8">
    <location>
        <begin position="6"/>
        <end position="159"/>
    </location>
</feature>
<evidence type="ECO:0000269" key="1">
    <source>
    </source>
</evidence>
<evidence type="ECO:0000269" key="2">
    <source>
    </source>
</evidence>
<evidence type="ECO:0000269" key="3">
    <source>
    </source>
</evidence>
<evidence type="ECO:0000269" key="4">
    <source>
    </source>
</evidence>
<evidence type="ECO:0000269" key="5">
    <source>
    </source>
</evidence>
<evidence type="ECO:0000269" key="6">
    <source>
    </source>
</evidence>
<evidence type="ECO:0000269" key="7">
    <source>
    </source>
</evidence>
<evidence type="ECO:0000305" key="8"/>
<reference key="1">
    <citation type="journal article" date="1998" name="Nature">
        <title>Deciphering the biology of Mycobacterium tuberculosis from the complete genome sequence.</title>
        <authorList>
            <person name="Cole S.T."/>
            <person name="Brosch R."/>
            <person name="Parkhill J."/>
            <person name="Garnier T."/>
            <person name="Churcher C.M."/>
            <person name="Harris D.E."/>
            <person name="Gordon S.V."/>
            <person name="Eiglmeier K."/>
            <person name="Gas S."/>
            <person name="Barry C.E. III"/>
            <person name="Tekaia F."/>
            <person name="Badcock K."/>
            <person name="Basham D."/>
            <person name="Brown D."/>
            <person name="Chillingworth T."/>
            <person name="Connor R."/>
            <person name="Davies R.M."/>
            <person name="Devlin K."/>
            <person name="Feltwell T."/>
            <person name="Gentles S."/>
            <person name="Hamlin N."/>
            <person name="Holroyd S."/>
            <person name="Hornsby T."/>
            <person name="Jagels K."/>
            <person name="Krogh A."/>
            <person name="McLean J."/>
            <person name="Moule S."/>
            <person name="Murphy L.D."/>
            <person name="Oliver S."/>
            <person name="Osborne J."/>
            <person name="Quail M.A."/>
            <person name="Rajandream M.A."/>
            <person name="Rogers J."/>
            <person name="Rutter S."/>
            <person name="Seeger K."/>
            <person name="Skelton S."/>
            <person name="Squares S."/>
            <person name="Squares R."/>
            <person name="Sulston J.E."/>
            <person name="Taylor K."/>
            <person name="Whitehead S."/>
            <person name="Barrell B.G."/>
        </authorList>
    </citation>
    <scope>NUCLEOTIDE SEQUENCE [LARGE SCALE GENOMIC DNA]</scope>
    <source>
        <strain>ATCC 25618 / H37Rv</strain>
    </source>
</reference>
<reference key="2">
    <citation type="journal article" date="2008" name="Clin. Vaccine Immunol.">
        <title>Association of strong immune responses to PPE protein Rv1168c with active tuberculosis.</title>
        <authorList>
            <person name="Khan N."/>
            <person name="Alam K."/>
            <person name="Nair S."/>
            <person name="Valluri V.L."/>
            <person name="Murthy K.J.R."/>
            <person name="Mukhopadhyay S."/>
        </authorList>
    </citation>
    <scope>INDUCTION</scope>
    <scope>PUTATIVE FUNCTION AS A CANDIDATE FOR SERODIAGNOSIS</scope>
</reference>
<reference key="3">
    <citation type="journal article" date="2011" name="Mol. Cell. Proteomics">
        <title>Proteogenomic analysis of Mycobacterium tuberculosis by high resolution mass spectrometry.</title>
        <authorList>
            <person name="Kelkar D.S."/>
            <person name="Kumar D."/>
            <person name="Kumar P."/>
            <person name="Balakrishnan L."/>
            <person name="Muthusamy B."/>
            <person name="Yadav A.K."/>
            <person name="Shrivastava P."/>
            <person name="Marimuthu A."/>
            <person name="Anand S."/>
            <person name="Sundaram H."/>
            <person name="Kingsbury R."/>
            <person name="Harsha H.C."/>
            <person name="Nair B."/>
            <person name="Prasad T.S."/>
            <person name="Chauhan D.S."/>
            <person name="Katoch K."/>
            <person name="Katoch V.M."/>
            <person name="Kumar P."/>
            <person name="Chaerkady R."/>
            <person name="Ramachandran S."/>
            <person name="Dash D."/>
            <person name="Pandey A."/>
        </authorList>
    </citation>
    <scope>IDENTIFICATION BY MASS SPECTROMETRY [LARGE SCALE ANALYSIS]</scope>
    <source>
        <strain>ATCC 25618 / H37Rv</strain>
    </source>
</reference>
<reference key="4">
    <citation type="journal article" date="2012" name="J. Biol. Chem.">
        <title>Proline-proline-glutamic acid (PPE) protein Rv1168c of Mycobacterium tuberculosis augments transcription from HIV-1 long terminal repeat promoter.</title>
        <authorList>
            <person name="Bhat K.H."/>
            <person name="Chaitanya C.K."/>
            <person name="Parveen N."/>
            <person name="Varman R."/>
            <person name="Ghosh S."/>
            <person name="Mukhopadhyay S."/>
        </authorList>
    </citation>
    <scope>FUNCTION IN HIV-1 ACTIVATION</scope>
    <scope>INTERACTION WITH HOST TLR2</scope>
    <scope>SUBCELLULAR LOCATION</scope>
    <scope>DOMAIN</scope>
</reference>
<reference key="5">
    <citation type="journal article" date="2013" name="PLoS ONE">
        <title>The PPE domain of PPE17 is responsible for its surface localization and can be used to express heterologous proteins on the mycobacterial surface.</title>
        <authorList>
            <person name="Dona V."/>
            <person name="Ventura M."/>
            <person name="Sali M."/>
            <person name="Cascioferro A."/>
            <person name="Provvedi R."/>
            <person name="Palu G."/>
            <person name="Delogu G."/>
            <person name="Manganelli R."/>
        </authorList>
    </citation>
    <scope>SUBCELLULAR LOCATION</scope>
    <scope>INDUCTION</scope>
    <scope>DOMAIN</scope>
</reference>
<reference key="6">
    <citation type="journal article" date="2016" name="Infect. Genet. Evol.">
        <title>The Mycobacterium tuberculosis PPE protein Rv1168c induces stronger B cell response than Rv0256c in active TB patients.</title>
        <authorList>
            <person name="Abraham P.R."/>
            <person name="Udgata A."/>
            <person name="Latha G.S."/>
            <person name="Mukhopadhyay S."/>
        </authorList>
    </citation>
    <scope>FUNCTION AS A CANDIDATE FOR SERODIAGNOSIS</scope>
</reference>
<reference key="7">
    <citation type="journal article" date="2016" name="J. Immunol.">
        <title>Transduction of functionally contrasting signals by two Mycobacterial PPE proteins downstream of TLR2 receptors.</title>
        <authorList>
            <person name="Udgata A."/>
            <person name="Qureshi R."/>
            <person name="Mukhopadhyay S."/>
        </authorList>
    </citation>
    <scope>FUNCTION IN PRO-INFLAMMATORY-TYPE RESPONSE</scope>
</reference>
<reference key="8">
    <citation type="journal article" date="2017" name="PLoS ONE">
        <title>The N-terminal domain of Mycobacterium tuberculosis PPE17 (Rv1168c) protein plays a dominant role in inducing antibody responses in active TB patients.</title>
        <authorList>
            <person name="Abraham P.R."/>
            <person name="Pathak N."/>
            <person name="Pradhan G."/>
            <person name="Sumanlatha G."/>
            <person name="Mukhopadhyay S."/>
        </authorList>
    </citation>
    <scope>FUNCTION AS A CANDIDATE FOR SERODIAGNOSIS</scope>
</reference>
<reference key="9">
    <citation type="journal article" date="2018" name="PLoS ONE">
        <title>PPE17 (Rv1168c) protein of Mycobacterium tuberculosis detects individuals with latent TB infection.</title>
        <authorList>
            <person name="Abraham P.R."/>
            <person name="Devalraju K.P."/>
            <person name="Jha V."/>
            <person name="Valluri V.L."/>
            <person name="Mukhopadhyay S."/>
        </authorList>
    </citation>
    <scope>FUNCTION AS A CANDIDATE FOR SERODIAGNOSIS</scope>
</reference>
<reference key="10">
    <citation type="journal article" date="2019" name="Iran. J. Med. Sci.">
        <title>Cloning, expression, and refolding of PPE17 protein of Mycobacterium tuberculosis as a promising vaccine candidate.</title>
        <authorList>
            <person name="Najafi A."/>
            <person name="Tafaghodi M."/>
            <person name="Sankian M."/>
            <person name="Amini Y."/>
            <person name="Ghazvini K."/>
        </authorList>
    </citation>
    <scope>EXPRESSION</scope>
    <scope>REFOLDING</scope>
</reference>
<keyword id="KW-0134">Cell wall</keyword>
<keyword id="KW-1185">Reference proteome</keyword>
<keyword id="KW-0964">Secreted</keyword>
<keyword id="KW-0843">Virulence</keyword>
<organism>
    <name type="scientific">Mycobacterium tuberculosis (strain ATCC 25618 / H37Rv)</name>
    <dbReference type="NCBI Taxonomy" id="83332"/>
    <lineage>
        <taxon>Bacteria</taxon>
        <taxon>Bacillati</taxon>
        <taxon>Actinomycetota</taxon>
        <taxon>Actinomycetes</taxon>
        <taxon>Mycobacteriales</taxon>
        <taxon>Mycobacteriaceae</taxon>
        <taxon>Mycobacterium</taxon>
        <taxon>Mycobacterium tuberculosis complex</taxon>
    </lineage>
</organism>
<sequence>MDFTIFPPEFNSLNIQGSARPFLVAANAWKNLSNELSYAASRFESEINGLITSWRGPSSTIMAAAVAPFRAWIVTTASLAELVADHISVVAGAYEAAHAAHVPLPVIETNRLTRLALATTNIFGIHTPAIFALDALYAQYWSQDGEAMNLYATMAAAAARLTPFSPPAPIANPGALARLYELIGSVSETVGSFAAPATKNLPSKLWTLLTKGTYPLTAARISSIPVEYVLAFVEGSNMGQMMGNLAMRSLTPTLKGPLELLPNAVRPAVSATLGNADTIGGLSVPPSWVADKSITPLAKAVPTSAPGGPSGTSWAQLGLASLAGGAVGAVAARTRSGVILRSPAAG</sequence>
<protein>
    <recommendedName>
        <fullName evidence="8">PPE family protein PPE17</fullName>
    </recommendedName>
</protein>
<gene>
    <name type="primary">PPE17</name>
    <name type="ordered locus">Rv1168c</name>
</gene>
<accession>P9WI27</accession>
<accession>L0T8M7</accession>
<accession>Q79FR6</accession>
<accession>Q7D8Q2</accession>
<proteinExistence type="evidence at protein level"/>